<name>DAPF_BRADU</name>
<proteinExistence type="inferred from homology"/>
<comment type="function">
    <text evidence="1">Catalyzes the stereoinversion of LL-2,6-diaminopimelate (L,L-DAP) to meso-diaminopimelate (meso-DAP), a precursor of L-lysine and an essential component of the bacterial peptidoglycan.</text>
</comment>
<comment type="catalytic activity">
    <reaction evidence="1">
        <text>(2S,6S)-2,6-diaminopimelate = meso-2,6-diaminopimelate</text>
        <dbReference type="Rhea" id="RHEA:15393"/>
        <dbReference type="ChEBI" id="CHEBI:57609"/>
        <dbReference type="ChEBI" id="CHEBI:57791"/>
        <dbReference type="EC" id="5.1.1.7"/>
    </reaction>
</comment>
<comment type="pathway">
    <text evidence="1">Amino-acid biosynthesis; L-lysine biosynthesis via DAP pathway; DL-2,6-diaminopimelate from LL-2,6-diaminopimelate: step 1/1.</text>
</comment>
<comment type="subunit">
    <text evidence="1">Homodimer.</text>
</comment>
<comment type="subcellular location">
    <subcellularLocation>
        <location evidence="1">Cytoplasm</location>
    </subcellularLocation>
</comment>
<comment type="similarity">
    <text evidence="1">Belongs to the diaminopimelate epimerase family.</text>
</comment>
<dbReference type="EC" id="5.1.1.7" evidence="1"/>
<dbReference type="EMBL" id="BA000040">
    <property type="protein sequence ID" value="BAC45742.1"/>
    <property type="molecule type" value="Genomic_DNA"/>
</dbReference>
<dbReference type="RefSeq" id="NP_767117.1">
    <property type="nucleotide sequence ID" value="NC_004463.1"/>
</dbReference>
<dbReference type="RefSeq" id="WP_011083308.1">
    <property type="nucleotide sequence ID" value="NC_004463.1"/>
</dbReference>
<dbReference type="SMR" id="Q89X45"/>
<dbReference type="FunCoup" id="Q89X45">
    <property type="interactions" value="736"/>
</dbReference>
<dbReference type="STRING" id="224911.AAV28_41635"/>
<dbReference type="EnsemblBacteria" id="BAC45742">
    <property type="protein sequence ID" value="BAC45742"/>
    <property type="gene ID" value="BAC45742"/>
</dbReference>
<dbReference type="GeneID" id="46495623"/>
<dbReference type="KEGG" id="bja:bll0477"/>
<dbReference type="PATRIC" id="fig|224911.44.peg.9011"/>
<dbReference type="eggNOG" id="COG0253">
    <property type="taxonomic scope" value="Bacteria"/>
</dbReference>
<dbReference type="HOGENOM" id="CLU_053306_1_0_5"/>
<dbReference type="InParanoid" id="Q89X45"/>
<dbReference type="OrthoDB" id="9805408at2"/>
<dbReference type="PhylomeDB" id="Q89X45"/>
<dbReference type="UniPathway" id="UPA00034">
    <property type="reaction ID" value="UER00025"/>
</dbReference>
<dbReference type="Proteomes" id="UP000002526">
    <property type="component" value="Chromosome"/>
</dbReference>
<dbReference type="GO" id="GO:0005829">
    <property type="term" value="C:cytosol"/>
    <property type="evidence" value="ECO:0000318"/>
    <property type="project" value="GO_Central"/>
</dbReference>
<dbReference type="GO" id="GO:0008837">
    <property type="term" value="F:diaminopimelate epimerase activity"/>
    <property type="evidence" value="ECO:0000318"/>
    <property type="project" value="GO_Central"/>
</dbReference>
<dbReference type="GO" id="GO:0009089">
    <property type="term" value="P:lysine biosynthetic process via diaminopimelate"/>
    <property type="evidence" value="ECO:0000318"/>
    <property type="project" value="GO_Central"/>
</dbReference>
<dbReference type="FunFam" id="3.10.310.10:FF:000004">
    <property type="entry name" value="Diaminopimelate epimerase"/>
    <property type="match status" value="1"/>
</dbReference>
<dbReference type="Gene3D" id="3.10.310.10">
    <property type="entry name" value="Diaminopimelate Epimerase, Chain A, domain 1"/>
    <property type="match status" value="2"/>
</dbReference>
<dbReference type="HAMAP" id="MF_00197">
    <property type="entry name" value="DAP_epimerase"/>
    <property type="match status" value="1"/>
</dbReference>
<dbReference type="InterPro" id="IPR018510">
    <property type="entry name" value="DAP_epimerase_AS"/>
</dbReference>
<dbReference type="InterPro" id="IPR001653">
    <property type="entry name" value="DAP_epimerase_DapF"/>
</dbReference>
<dbReference type="NCBIfam" id="TIGR00652">
    <property type="entry name" value="DapF"/>
    <property type="match status" value="1"/>
</dbReference>
<dbReference type="PANTHER" id="PTHR31689:SF0">
    <property type="entry name" value="DIAMINOPIMELATE EPIMERASE"/>
    <property type="match status" value="1"/>
</dbReference>
<dbReference type="PANTHER" id="PTHR31689">
    <property type="entry name" value="DIAMINOPIMELATE EPIMERASE, CHLOROPLASTIC"/>
    <property type="match status" value="1"/>
</dbReference>
<dbReference type="Pfam" id="PF01678">
    <property type="entry name" value="DAP_epimerase"/>
    <property type="match status" value="2"/>
</dbReference>
<dbReference type="SUPFAM" id="SSF54506">
    <property type="entry name" value="Diaminopimelate epimerase-like"/>
    <property type="match status" value="2"/>
</dbReference>
<dbReference type="PROSITE" id="PS01326">
    <property type="entry name" value="DAP_EPIMERASE"/>
    <property type="match status" value="1"/>
</dbReference>
<reference key="1">
    <citation type="journal article" date="2002" name="DNA Res.">
        <title>Complete genomic sequence of nitrogen-fixing symbiotic bacterium Bradyrhizobium japonicum USDA110.</title>
        <authorList>
            <person name="Kaneko T."/>
            <person name="Nakamura Y."/>
            <person name="Sato S."/>
            <person name="Minamisawa K."/>
            <person name="Uchiumi T."/>
            <person name="Sasamoto S."/>
            <person name="Watanabe A."/>
            <person name="Idesawa K."/>
            <person name="Iriguchi M."/>
            <person name="Kawashima K."/>
            <person name="Kohara M."/>
            <person name="Matsumoto M."/>
            <person name="Shimpo S."/>
            <person name="Tsuruoka H."/>
            <person name="Wada T."/>
            <person name="Yamada M."/>
            <person name="Tabata S."/>
        </authorList>
    </citation>
    <scope>NUCLEOTIDE SEQUENCE [LARGE SCALE GENOMIC DNA]</scope>
    <source>
        <strain>JCM 10833 / BCRC 13528 / IAM 13628 / NBRC 14792 / USDA 110</strain>
    </source>
</reference>
<feature type="chain" id="PRO_0000149822" description="Diaminopimelate epimerase">
    <location>
        <begin position="1"/>
        <end position="291"/>
    </location>
</feature>
<feature type="active site" description="Proton donor" evidence="1">
    <location>
        <position position="79"/>
    </location>
</feature>
<feature type="active site" description="Proton acceptor" evidence="1">
    <location>
        <position position="227"/>
    </location>
</feature>
<feature type="binding site" evidence="1">
    <location>
        <position position="17"/>
    </location>
    <ligand>
        <name>substrate</name>
    </ligand>
</feature>
<feature type="binding site" evidence="1">
    <location>
        <position position="50"/>
    </location>
    <ligand>
        <name>substrate</name>
    </ligand>
</feature>
<feature type="binding site" evidence="1">
    <location>
        <position position="70"/>
    </location>
    <ligand>
        <name>substrate</name>
    </ligand>
</feature>
<feature type="binding site" evidence="1">
    <location>
        <begin position="80"/>
        <end position="81"/>
    </location>
    <ligand>
        <name>substrate</name>
    </ligand>
</feature>
<feature type="binding site" evidence="1">
    <location>
        <position position="167"/>
    </location>
    <ligand>
        <name>substrate</name>
    </ligand>
</feature>
<feature type="binding site" evidence="1">
    <location>
        <position position="200"/>
    </location>
    <ligand>
        <name>substrate</name>
    </ligand>
</feature>
<feature type="binding site" evidence="1">
    <location>
        <begin position="218"/>
        <end position="219"/>
    </location>
    <ligand>
        <name>substrate</name>
    </ligand>
</feature>
<feature type="binding site" evidence="1">
    <location>
        <begin position="228"/>
        <end position="229"/>
    </location>
    <ligand>
        <name>substrate</name>
    </ligand>
</feature>
<feature type="site" description="Could be important to modulate the pK values of the two catalytic cysteine residues" evidence="1">
    <location>
        <position position="169"/>
    </location>
</feature>
<feature type="site" description="Could be important to modulate the pK values of the two catalytic cysteine residues" evidence="1">
    <location>
        <position position="218"/>
    </location>
</feature>
<accession>Q89X45</accession>
<organism>
    <name type="scientific">Bradyrhizobium diazoefficiens (strain JCM 10833 / BCRC 13528 / IAM 13628 / NBRC 14792 / USDA 110)</name>
    <dbReference type="NCBI Taxonomy" id="224911"/>
    <lineage>
        <taxon>Bacteria</taxon>
        <taxon>Pseudomonadati</taxon>
        <taxon>Pseudomonadota</taxon>
        <taxon>Alphaproteobacteria</taxon>
        <taxon>Hyphomicrobiales</taxon>
        <taxon>Nitrobacteraceae</taxon>
        <taxon>Bradyrhizobium</taxon>
    </lineage>
</organism>
<protein>
    <recommendedName>
        <fullName evidence="1">Diaminopimelate epimerase</fullName>
        <shortName evidence="1">DAP epimerase</shortName>
        <ecNumber evidence="1">5.1.1.7</ecNumber>
    </recommendedName>
    <alternativeName>
        <fullName evidence="1">PLP-independent amino acid racemase</fullName>
    </alternativeName>
</protein>
<sequence>MSALANHAFAKMNGIGNEIVVVDMRDSTAKVTPDDARAVASAQGGVPYDQLMVLQKPRLDGTEAFISIYNNDGSEAGACGNGMRCVVRRIFEKTGQATATFETAAGLLNAWQGPAPDLYTVDMGVPKFGWQDIPLAEEFRDTRYIELQIGPIDNPILHSPSVVSMGNPHAIFWVDDVNAYDLARFGPLLENHPIFPERANITLAHIVDRDHITIRTWERGAGLTRACGSAACATAVAAARLKRAERNVEITLPGGKLGIEWRERDDHVLMTGTATFEYEGNFDPALFAPAG</sequence>
<keyword id="KW-0028">Amino-acid biosynthesis</keyword>
<keyword id="KW-0963">Cytoplasm</keyword>
<keyword id="KW-0413">Isomerase</keyword>
<keyword id="KW-0457">Lysine biosynthesis</keyword>
<keyword id="KW-1185">Reference proteome</keyword>
<gene>
    <name evidence="1" type="primary">dapF</name>
    <name type="ordered locus">bll0477</name>
</gene>
<evidence type="ECO:0000255" key="1">
    <source>
        <dbReference type="HAMAP-Rule" id="MF_00197"/>
    </source>
</evidence>